<dbReference type="EMBL" id="CP000133">
    <property type="protein sequence ID" value="ABC91103.1"/>
    <property type="molecule type" value="Genomic_DNA"/>
</dbReference>
<dbReference type="RefSeq" id="WP_011425583.1">
    <property type="nucleotide sequence ID" value="NC_007761.1"/>
</dbReference>
<dbReference type="SMR" id="Q2K7T3"/>
<dbReference type="GeneID" id="66146516"/>
<dbReference type="KEGG" id="ret:RHE_CH02323"/>
<dbReference type="eggNOG" id="COG0468">
    <property type="taxonomic scope" value="Bacteria"/>
</dbReference>
<dbReference type="HOGENOM" id="CLU_040469_1_2_5"/>
<dbReference type="OrthoDB" id="9776733at2"/>
<dbReference type="Proteomes" id="UP000001936">
    <property type="component" value="Chromosome"/>
</dbReference>
<dbReference type="GO" id="GO:0005829">
    <property type="term" value="C:cytosol"/>
    <property type="evidence" value="ECO:0007669"/>
    <property type="project" value="TreeGrafter"/>
</dbReference>
<dbReference type="GO" id="GO:0005524">
    <property type="term" value="F:ATP binding"/>
    <property type="evidence" value="ECO:0007669"/>
    <property type="project" value="UniProtKB-UniRule"/>
</dbReference>
<dbReference type="GO" id="GO:0016887">
    <property type="term" value="F:ATP hydrolysis activity"/>
    <property type="evidence" value="ECO:0007669"/>
    <property type="project" value="InterPro"/>
</dbReference>
<dbReference type="GO" id="GO:0140664">
    <property type="term" value="F:ATP-dependent DNA damage sensor activity"/>
    <property type="evidence" value="ECO:0007669"/>
    <property type="project" value="InterPro"/>
</dbReference>
<dbReference type="GO" id="GO:0003684">
    <property type="term" value="F:damaged DNA binding"/>
    <property type="evidence" value="ECO:0007669"/>
    <property type="project" value="UniProtKB-UniRule"/>
</dbReference>
<dbReference type="GO" id="GO:0003697">
    <property type="term" value="F:single-stranded DNA binding"/>
    <property type="evidence" value="ECO:0007669"/>
    <property type="project" value="UniProtKB-UniRule"/>
</dbReference>
<dbReference type="GO" id="GO:0006310">
    <property type="term" value="P:DNA recombination"/>
    <property type="evidence" value="ECO:0007669"/>
    <property type="project" value="UniProtKB-UniRule"/>
</dbReference>
<dbReference type="GO" id="GO:0006281">
    <property type="term" value="P:DNA repair"/>
    <property type="evidence" value="ECO:0007669"/>
    <property type="project" value="UniProtKB-UniRule"/>
</dbReference>
<dbReference type="GO" id="GO:0009432">
    <property type="term" value="P:SOS response"/>
    <property type="evidence" value="ECO:0007669"/>
    <property type="project" value="UniProtKB-UniRule"/>
</dbReference>
<dbReference type="CDD" id="cd00983">
    <property type="entry name" value="RecA"/>
    <property type="match status" value="1"/>
</dbReference>
<dbReference type="FunFam" id="3.40.50.300:FF:000087">
    <property type="entry name" value="Recombinase RecA"/>
    <property type="match status" value="1"/>
</dbReference>
<dbReference type="Gene3D" id="3.40.50.300">
    <property type="entry name" value="P-loop containing nucleotide triphosphate hydrolases"/>
    <property type="match status" value="1"/>
</dbReference>
<dbReference type="HAMAP" id="MF_00268">
    <property type="entry name" value="RecA"/>
    <property type="match status" value="1"/>
</dbReference>
<dbReference type="InterPro" id="IPR003593">
    <property type="entry name" value="AAA+_ATPase"/>
</dbReference>
<dbReference type="InterPro" id="IPR013765">
    <property type="entry name" value="DNA_recomb/repair_RecA"/>
</dbReference>
<dbReference type="InterPro" id="IPR020584">
    <property type="entry name" value="DNA_recomb/repair_RecA_CS"/>
</dbReference>
<dbReference type="InterPro" id="IPR027417">
    <property type="entry name" value="P-loop_NTPase"/>
</dbReference>
<dbReference type="InterPro" id="IPR049261">
    <property type="entry name" value="RecA-like_C"/>
</dbReference>
<dbReference type="InterPro" id="IPR049428">
    <property type="entry name" value="RecA-like_N"/>
</dbReference>
<dbReference type="InterPro" id="IPR020588">
    <property type="entry name" value="RecA_ATP-bd"/>
</dbReference>
<dbReference type="InterPro" id="IPR023400">
    <property type="entry name" value="RecA_C_sf"/>
</dbReference>
<dbReference type="InterPro" id="IPR020587">
    <property type="entry name" value="RecA_monomer-monomer_interface"/>
</dbReference>
<dbReference type="NCBIfam" id="TIGR02012">
    <property type="entry name" value="tigrfam_recA"/>
    <property type="match status" value="1"/>
</dbReference>
<dbReference type="PANTHER" id="PTHR45900:SF1">
    <property type="entry name" value="MITOCHONDRIAL DNA REPAIR PROTEIN RECA HOMOLOG-RELATED"/>
    <property type="match status" value="1"/>
</dbReference>
<dbReference type="PANTHER" id="PTHR45900">
    <property type="entry name" value="RECA"/>
    <property type="match status" value="1"/>
</dbReference>
<dbReference type="Pfam" id="PF00154">
    <property type="entry name" value="RecA"/>
    <property type="match status" value="1"/>
</dbReference>
<dbReference type="Pfam" id="PF21096">
    <property type="entry name" value="RecA_C"/>
    <property type="match status" value="1"/>
</dbReference>
<dbReference type="PRINTS" id="PR00142">
    <property type="entry name" value="RECA"/>
</dbReference>
<dbReference type="SMART" id="SM00382">
    <property type="entry name" value="AAA"/>
    <property type="match status" value="1"/>
</dbReference>
<dbReference type="SUPFAM" id="SSF52540">
    <property type="entry name" value="P-loop containing nucleoside triphosphate hydrolases"/>
    <property type="match status" value="1"/>
</dbReference>
<dbReference type="SUPFAM" id="SSF54752">
    <property type="entry name" value="RecA protein, C-terminal domain"/>
    <property type="match status" value="1"/>
</dbReference>
<dbReference type="PROSITE" id="PS00321">
    <property type="entry name" value="RECA_1"/>
    <property type="match status" value="1"/>
</dbReference>
<dbReference type="PROSITE" id="PS50162">
    <property type="entry name" value="RECA_2"/>
    <property type="match status" value="1"/>
</dbReference>
<dbReference type="PROSITE" id="PS50163">
    <property type="entry name" value="RECA_3"/>
    <property type="match status" value="1"/>
</dbReference>
<sequence>MSQNSLRLVEDKSVDKSKALEAALSQIERSFGKGSIMKLGSNENVVEIETVSTGSLGLDIALGIGGLPKGRIIEIYGPESSGKTTLALQTIAESQKKGGICAFVDAEHALDPVYARKLGVDLQNLLISQPDTGEQALEITDTLVRSGAVDVLVVDSVAALTPRAEIEGEMGDSLPGMQARLMSQALRKLTASISKSNCMVIFINQIRMKIGVMFGSPETTTGGNALKFYASVRLDIRRIGSVKEREEVVGNQTRVKVVKNKMAPPFKQVEFDIMYGEGVSKTGELVDLGVKAGIVEKSGAWFSYNSQRLGQGRENAKTFLRDNPDLAREIELALRQNAGLIADRFLQNGGPDADDGDAAAEM</sequence>
<reference key="1">
    <citation type="journal article" date="2006" name="Proc. Natl. Acad. Sci. U.S.A.">
        <title>The partitioned Rhizobium etli genome: genetic and metabolic redundancy in seven interacting replicons.</title>
        <authorList>
            <person name="Gonzalez V."/>
            <person name="Santamaria R.I."/>
            <person name="Bustos P."/>
            <person name="Hernandez-Gonzalez I."/>
            <person name="Medrano-Soto A."/>
            <person name="Moreno-Hagelsieb G."/>
            <person name="Janga S.C."/>
            <person name="Ramirez M.A."/>
            <person name="Jimenez-Jacinto V."/>
            <person name="Collado-Vides J."/>
            <person name="Davila G."/>
        </authorList>
    </citation>
    <scope>NUCLEOTIDE SEQUENCE [LARGE SCALE GENOMIC DNA]</scope>
    <source>
        <strain>ATCC 51251 / DSM 11541 / JCM 21823 / NBRC 15573 / CFN 42</strain>
    </source>
</reference>
<keyword id="KW-0067">ATP-binding</keyword>
<keyword id="KW-0963">Cytoplasm</keyword>
<keyword id="KW-0227">DNA damage</keyword>
<keyword id="KW-0233">DNA recombination</keyword>
<keyword id="KW-0234">DNA repair</keyword>
<keyword id="KW-0238">DNA-binding</keyword>
<keyword id="KW-0547">Nucleotide-binding</keyword>
<keyword id="KW-1185">Reference proteome</keyword>
<keyword id="KW-0742">SOS response</keyword>
<evidence type="ECO:0000255" key="1">
    <source>
        <dbReference type="HAMAP-Rule" id="MF_00268"/>
    </source>
</evidence>
<feature type="chain" id="PRO_1000047978" description="Protein RecA">
    <location>
        <begin position="1"/>
        <end position="362"/>
    </location>
</feature>
<feature type="binding site" evidence="1">
    <location>
        <begin position="77"/>
        <end position="84"/>
    </location>
    <ligand>
        <name>ATP</name>
        <dbReference type="ChEBI" id="CHEBI:30616"/>
    </ligand>
</feature>
<gene>
    <name evidence="1" type="primary">recA</name>
    <name type="ordered locus">RHE_CH02323</name>
</gene>
<name>RECA_RHIEC</name>
<organism>
    <name type="scientific">Rhizobium etli (strain ATCC 51251 / DSM 11541 / JCM 21823 / NBRC 15573 / CFN 42)</name>
    <dbReference type="NCBI Taxonomy" id="347834"/>
    <lineage>
        <taxon>Bacteria</taxon>
        <taxon>Pseudomonadati</taxon>
        <taxon>Pseudomonadota</taxon>
        <taxon>Alphaproteobacteria</taxon>
        <taxon>Hyphomicrobiales</taxon>
        <taxon>Rhizobiaceae</taxon>
        <taxon>Rhizobium/Agrobacterium group</taxon>
        <taxon>Rhizobium</taxon>
    </lineage>
</organism>
<protein>
    <recommendedName>
        <fullName evidence="1">Protein RecA</fullName>
    </recommendedName>
    <alternativeName>
        <fullName evidence="1">Recombinase A</fullName>
    </alternativeName>
</protein>
<comment type="function">
    <text evidence="1">Can catalyze the hydrolysis of ATP in the presence of single-stranded DNA, the ATP-dependent uptake of single-stranded DNA by duplex DNA, and the ATP-dependent hybridization of homologous single-stranded DNAs. It interacts with LexA causing its activation and leading to its autocatalytic cleavage.</text>
</comment>
<comment type="subcellular location">
    <subcellularLocation>
        <location evidence="1">Cytoplasm</location>
    </subcellularLocation>
</comment>
<comment type="similarity">
    <text evidence="1">Belongs to the RecA family.</text>
</comment>
<proteinExistence type="inferred from homology"/>
<accession>Q2K7T3</accession>